<gene>
    <name evidence="1" type="primary">rplT</name>
    <name type="ordered locus">Oter_2355</name>
</gene>
<proteinExistence type="inferred from homology"/>
<feature type="chain" id="PRO_1000122348" description="Large ribosomal subunit protein bL20">
    <location>
        <begin position="1"/>
        <end position="127"/>
    </location>
</feature>
<evidence type="ECO:0000255" key="1">
    <source>
        <dbReference type="HAMAP-Rule" id="MF_00382"/>
    </source>
</evidence>
<evidence type="ECO:0000305" key="2"/>
<name>RL20_OPITP</name>
<protein>
    <recommendedName>
        <fullName evidence="1">Large ribosomal subunit protein bL20</fullName>
    </recommendedName>
    <alternativeName>
        <fullName evidence="2">50S ribosomal protein L20</fullName>
    </alternativeName>
</protein>
<comment type="function">
    <text evidence="1">Binds directly to 23S ribosomal RNA and is necessary for the in vitro assembly process of the 50S ribosomal subunit. It is not involved in the protein synthesizing functions of that subunit.</text>
</comment>
<comment type="similarity">
    <text evidence="1">Belongs to the bacterial ribosomal protein bL20 family.</text>
</comment>
<accession>B1ZQM8</accession>
<dbReference type="EMBL" id="CP001032">
    <property type="protein sequence ID" value="ACB75637.1"/>
    <property type="molecule type" value="Genomic_DNA"/>
</dbReference>
<dbReference type="RefSeq" id="WP_012375174.1">
    <property type="nucleotide sequence ID" value="NC_010571.1"/>
</dbReference>
<dbReference type="SMR" id="B1ZQM8"/>
<dbReference type="STRING" id="452637.Oter_2355"/>
<dbReference type="KEGG" id="ote:Oter_2355"/>
<dbReference type="eggNOG" id="COG0292">
    <property type="taxonomic scope" value="Bacteria"/>
</dbReference>
<dbReference type="HOGENOM" id="CLU_123265_0_1_0"/>
<dbReference type="OrthoDB" id="9808966at2"/>
<dbReference type="Proteomes" id="UP000007013">
    <property type="component" value="Chromosome"/>
</dbReference>
<dbReference type="GO" id="GO:1990904">
    <property type="term" value="C:ribonucleoprotein complex"/>
    <property type="evidence" value="ECO:0007669"/>
    <property type="project" value="UniProtKB-KW"/>
</dbReference>
<dbReference type="GO" id="GO:0005840">
    <property type="term" value="C:ribosome"/>
    <property type="evidence" value="ECO:0007669"/>
    <property type="project" value="UniProtKB-KW"/>
</dbReference>
<dbReference type="GO" id="GO:0019843">
    <property type="term" value="F:rRNA binding"/>
    <property type="evidence" value="ECO:0007669"/>
    <property type="project" value="UniProtKB-UniRule"/>
</dbReference>
<dbReference type="GO" id="GO:0003735">
    <property type="term" value="F:structural constituent of ribosome"/>
    <property type="evidence" value="ECO:0007669"/>
    <property type="project" value="InterPro"/>
</dbReference>
<dbReference type="GO" id="GO:0000027">
    <property type="term" value="P:ribosomal large subunit assembly"/>
    <property type="evidence" value="ECO:0007669"/>
    <property type="project" value="UniProtKB-UniRule"/>
</dbReference>
<dbReference type="GO" id="GO:0006412">
    <property type="term" value="P:translation"/>
    <property type="evidence" value="ECO:0007669"/>
    <property type="project" value="InterPro"/>
</dbReference>
<dbReference type="CDD" id="cd07026">
    <property type="entry name" value="Ribosomal_L20"/>
    <property type="match status" value="1"/>
</dbReference>
<dbReference type="FunFam" id="1.10.1900.20:FF:000001">
    <property type="entry name" value="50S ribosomal protein L20"/>
    <property type="match status" value="1"/>
</dbReference>
<dbReference type="Gene3D" id="6.10.160.10">
    <property type="match status" value="1"/>
</dbReference>
<dbReference type="Gene3D" id="1.10.1900.20">
    <property type="entry name" value="Ribosomal protein L20"/>
    <property type="match status" value="1"/>
</dbReference>
<dbReference type="HAMAP" id="MF_00382">
    <property type="entry name" value="Ribosomal_bL20"/>
    <property type="match status" value="1"/>
</dbReference>
<dbReference type="InterPro" id="IPR005813">
    <property type="entry name" value="Ribosomal_bL20"/>
</dbReference>
<dbReference type="InterPro" id="IPR049946">
    <property type="entry name" value="RIBOSOMAL_L20_CS"/>
</dbReference>
<dbReference type="InterPro" id="IPR035566">
    <property type="entry name" value="Ribosomal_protein_bL20_C"/>
</dbReference>
<dbReference type="NCBIfam" id="TIGR01032">
    <property type="entry name" value="rplT_bact"/>
    <property type="match status" value="1"/>
</dbReference>
<dbReference type="PANTHER" id="PTHR10986">
    <property type="entry name" value="39S RIBOSOMAL PROTEIN L20"/>
    <property type="match status" value="1"/>
</dbReference>
<dbReference type="Pfam" id="PF00453">
    <property type="entry name" value="Ribosomal_L20"/>
    <property type="match status" value="1"/>
</dbReference>
<dbReference type="PRINTS" id="PR00062">
    <property type="entry name" value="RIBOSOMALL20"/>
</dbReference>
<dbReference type="SUPFAM" id="SSF74731">
    <property type="entry name" value="Ribosomal protein L20"/>
    <property type="match status" value="1"/>
</dbReference>
<dbReference type="PROSITE" id="PS00937">
    <property type="entry name" value="RIBOSOMAL_L20"/>
    <property type="match status" value="1"/>
</dbReference>
<reference key="1">
    <citation type="journal article" date="2011" name="J. Bacteriol.">
        <title>Genome sequence of the verrucomicrobium Opitutus terrae PB90-1, an abundant inhabitant of rice paddy soil ecosystems.</title>
        <authorList>
            <person name="van Passel M.W."/>
            <person name="Kant R."/>
            <person name="Palva A."/>
            <person name="Copeland A."/>
            <person name="Lucas S."/>
            <person name="Lapidus A."/>
            <person name="Glavina del Rio T."/>
            <person name="Pitluck S."/>
            <person name="Goltsman E."/>
            <person name="Clum A."/>
            <person name="Sun H."/>
            <person name="Schmutz J."/>
            <person name="Larimer F.W."/>
            <person name="Land M.L."/>
            <person name="Hauser L."/>
            <person name="Kyrpides N."/>
            <person name="Mikhailova N."/>
            <person name="Richardson P.P."/>
            <person name="Janssen P.H."/>
            <person name="de Vos W.M."/>
            <person name="Smidt H."/>
        </authorList>
    </citation>
    <scope>NUCLEOTIDE SEQUENCE [LARGE SCALE GENOMIC DNA]</scope>
    <source>
        <strain>DSM 11246 / JCM 15787 / PB90-1</strain>
    </source>
</reference>
<organism>
    <name type="scientific">Opitutus terrae (strain DSM 11246 / JCM 15787 / PB90-1)</name>
    <dbReference type="NCBI Taxonomy" id="452637"/>
    <lineage>
        <taxon>Bacteria</taxon>
        <taxon>Pseudomonadati</taxon>
        <taxon>Verrucomicrobiota</taxon>
        <taxon>Opitutia</taxon>
        <taxon>Opitutales</taxon>
        <taxon>Opitutaceae</taxon>
        <taxon>Opitutus</taxon>
    </lineage>
</organism>
<sequence length="127" mass="14426">MARVTNSPASRKRRKKVLKYAKGYFGSKSKLYRYAKEAVQHAWQYAYDHRRKKKSDFRALWIVRVNAACRNAGISYSRFMEGLKAANIALDRKVLADLAVRDEAGFNVLVKQAQDALKTKAASAKKA</sequence>
<keyword id="KW-1185">Reference proteome</keyword>
<keyword id="KW-0687">Ribonucleoprotein</keyword>
<keyword id="KW-0689">Ribosomal protein</keyword>
<keyword id="KW-0694">RNA-binding</keyword>
<keyword id="KW-0699">rRNA-binding</keyword>